<feature type="signal peptide" evidence="1">
    <location>
        <begin position="1"/>
        <end position="24"/>
    </location>
</feature>
<feature type="chain" id="PRO_0000030839" description="Angiogenin">
    <location>
        <begin position="25"/>
        <end position="146"/>
    </location>
</feature>
<feature type="short sequence motif" description="Nucleolar localization signal" evidence="1">
    <location>
        <begin position="55"/>
        <end position="59"/>
    </location>
</feature>
<feature type="active site" description="Proton acceptor" evidence="1">
    <location>
        <position position="37"/>
    </location>
</feature>
<feature type="active site" description="Proton donor" evidence="1">
    <location>
        <position position="138"/>
    </location>
</feature>
<feature type="binding site" evidence="1">
    <location>
        <position position="105"/>
    </location>
    <ligand>
        <name>tRNA</name>
        <dbReference type="ChEBI" id="CHEBI:17843"/>
    </ligand>
</feature>
<feature type="modified residue" description="Pyrrolidone carboxylic acid" evidence="1">
    <location>
        <position position="25"/>
    </location>
</feature>
<feature type="disulfide bond" evidence="1">
    <location>
        <begin position="50"/>
        <end position="105"/>
    </location>
</feature>
<feature type="disulfide bond" evidence="1">
    <location>
        <begin position="63"/>
        <end position="116"/>
    </location>
</feature>
<feature type="disulfide bond" evidence="1">
    <location>
        <begin position="81"/>
        <end position="131"/>
    </location>
</feature>
<dbReference type="EC" id="3.1.27.-" evidence="1"/>
<dbReference type="EMBL" id="AF441669">
    <property type="protein sequence ID" value="AAL61651.1"/>
    <property type="molecule type" value="Genomic_DNA"/>
</dbReference>
<dbReference type="SMR" id="Q8WN61"/>
<dbReference type="GO" id="GO:0032311">
    <property type="term" value="C:angiogenin-PRI complex"/>
    <property type="evidence" value="ECO:0000250"/>
    <property type="project" value="UniProtKB"/>
</dbReference>
<dbReference type="GO" id="GO:0005604">
    <property type="term" value="C:basement membrane"/>
    <property type="evidence" value="ECO:0000250"/>
    <property type="project" value="UniProtKB"/>
</dbReference>
<dbReference type="GO" id="GO:0005737">
    <property type="term" value="C:cytoplasm"/>
    <property type="evidence" value="ECO:0000250"/>
    <property type="project" value="UniProtKB"/>
</dbReference>
<dbReference type="GO" id="GO:0010494">
    <property type="term" value="C:cytoplasmic stress granule"/>
    <property type="evidence" value="ECO:0007669"/>
    <property type="project" value="UniProtKB-SubCell"/>
</dbReference>
<dbReference type="GO" id="GO:0030139">
    <property type="term" value="C:endocytic vesicle"/>
    <property type="evidence" value="ECO:0000250"/>
    <property type="project" value="UniProtKB"/>
</dbReference>
<dbReference type="GO" id="GO:0005615">
    <property type="term" value="C:extracellular space"/>
    <property type="evidence" value="ECO:0000250"/>
    <property type="project" value="UniProtKB"/>
</dbReference>
<dbReference type="GO" id="GO:0005730">
    <property type="term" value="C:nucleolus"/>
    <property type="evidence" value="ECO:0000250"/>
    <property type="project" value="UniProtKB"/>
</dbReference>
<dbReference type="GO" id="GO:0005634">
    <property type="term" value="C:nucleus"/>
    <property type="evidence" value="ECO:0000250"/>
    <property type="project" value="UniProtKB"/>
</dbReference>
<dbReference type="GO" id="GO:0003779">
    <property type="term" value="F:actin binding"/>
    <property type="evidence" value="ECO:0000250"/>
    <property type="project" value="UniProtKB"/>
</dbReference>
<dbReference type="GO" id="GO:0005507">
    <property type="term" value="F:copper ion binding"/>
    <property type="evidence" value="ECO:0000250"/>
    <property type="project" value="UniProtKB"/>
</dbReference>
<dbReference type="GO" id="GO:0003677">
    <property type="term" value="F:DNA binding"/>
    <property type="evidence" value="ECO:0007669"/>
    <property type="project" value="UniProtKB-KW"/>
</dbReference>
<dbReference type="GO" id="GO:0004519">
    <property type="term" value="F:endonuclease activity"/>
    <property type="evidence" value="ECO:0007669"/>
    <property type="project" value="UniProtKB-KW"/>
</dbReference>
<dbReference type="GO" id="GO:0008201">
    <property type="term" value="F:heparin binding"/>
    <property type="evidence" value="ECO:0000250"/>
    <property type="project" value="UniProtKB"/>
</dbReference>
<dbReference type="GO" id="GO:0042803">
    <property type="term" value="F:protein homodimerization activity"/>
    <property type="evidence" value="ECO:0000250"/>
    <property type="project" value="UniProtKB"/>
</dbReference>
<dbReference type="GO" id="GO:0004540">
    <property type="term" value="F:RNA nuclease activity"/>
    <property type="evidence" value="ECO:0000250"/>
    <property type="project" value="UniProtKB"/>
</dbReference>
<dbReference type="GO" id="GO:0005102">
    <property type="term" value="F:signaling receptor binding"/>
    <property type="evidence" value="ECO:0000250"/>
    <property type="project" value="UniProtKB"/>
</dbReference>
<dbReference type="GO" id="GO:0004549">
    <property type="term" value="F:tRNA-specific ribonuclease activity"/>
    <property type="evidence" value="ECO:0000250"/>
    <property type="project" value="UniProtKB"/>
</dbReference>
<dbReference type="GO" id="GO:0030041">
    <property type="term" value="P:actin filament polymerization"/>
    <property type="evidence" value="ECO:0000250"/>
    <property type="project" value="UniProtKB"/>
</dbReference>
<dbReference type="GO" id="GO:0001525">
    <property type="term" value="P:angiogenesis"/>
    <property type="evidence" value="ECO:0000250"/>
    <property type="project" value="UniProtKB"/>
</dbReference>
<dbReference type="GO" id="GO:0019731">
    <property type="term" value="P:antibacterial humoral response"/>
    <property type="evidence" value="ECO:0007669"/>
    <property type="project" value="TreeGrafter"/>
</dbReference>
<dbReference type="GO" id="GO:0061844">
    <property type="term" value="P:antimicrobial humoral immune response mediated by antimicrobial peptide"/>
    <property type="evidence" value="ECO:0007669"/>
    <property type="project" value="TreeGrafter"/>
</dbReference>
<dbReference type="GO" id="GO:0050830">
    <property type="term" value="P:defense response to Gram-positive bacterium"/>
    <property type="evidence" value="ECO:0007669"/>
    <property type="project" value="TreeGrafter"/>
</dbReference>
<dbReference type="GO" id="GO:0071425">
    <property type="term" value="P:hematopoietic stem cell proliferation"/>
    <property type="evidence" value="ECO:0000250"/>
    <property type="project" value="UniProtKB"/>
</dbReference>
<dbReference type="GO" id="GO:0045087">
    <property type="term" value="P:innate immune response"/>
    <property type="evidence" value="ECO:0007669"/>
    <property type="project" value="TreeGrafter"/>
</dbReference>
<dbReference type="GO" id="GO:0043066">
    <property type="term" value="P:negative regulation of apoptotic process"/>
    <property type="evidence" value="ECO:0000250"/>
    <property type="project" value="UniProtKB"/>
</dbReference>
<dbReference type="GO" id="GO:0048662">
    <property type="term" value="P:negative regulation of smooth muscle cell proliferation"/>
    <property type="evidence" value="ECO:0000250"/>
    <property type="project" value="UniProtKB"/>
</dbReference>
<dbReference type="GO" id="GO:0032055">
    <property type="term" value="P:negative regulation of translation in response to stress"/>
    <property type="evidence" value="ECO:0000250"/>
    <property type="project" value="UniProtKB"/>
</dbReference>
<dbReference type="GO" id="GO:0001938">
    <property type="term" value="P:positive regulation of endothelial cell proliferation"/>
    <property type="evidence" value="ECO:0000250"/>
    <property type="project" value="UniProtKB"/>
</dbReference>
<dbReference type="GO" id="GO:0050714">
    <property type="term" value="P:positive regulation of protein secretion"/>
    <property type="evidence" value="ECO:0000250"/>
    <property type="project" value="UniProtKB"/>
</dbReference>
<dbReference type="GO" id="GO:0001666">
    <property type="term" value="P:response to hypoxia"/>
    <property type="evidence" value="ECO:0000250"/>
    <property type="project" value="UniProtKB"/>
</dbReference>
<dbReference type="GO" id="GO:0009303">
    <property type="term" value="P:rRNA transcription"/>
    <property type="evidence" value="ECO:0000250"/>
    <property type="project" value="UniProtKB"/>
</dbReference>
<dbReference type="GO" id="GO:0023052">
    <property type="term" value="P:signaling"/>
    <property type="evidence" value="ECO:0000250"/>
    <property type="project" value="UniProtKB"/>
</dbReference>
<dbReference type="GO" id="GO:0034063">
    <property type="term" value="P:stress granule assembly"/>
    <property type="evidence" value="ECO:0000250"/>
    <property type="project" value="UniProtKB"/>
</dbReference>
<dbReference type="CDD" id="cd06265">
    <property type="entry name" value="RNase_A_canonical"/>
    <property type="match status" value="1"/>
</dbReference>
<dbReference type="FunFam" id="3.10.130.10:FF:000001">
    <property type="entry name" value="Ribonuclease pancreatic"/>
    <property type="match status" value="1"/>
</dbReference>
<dbReference type="Gene3D" id="3.10.130.10">
    <property type="entry name" value="Ribonuclease A-like domain"/>
    <property type="match status" value="1"/>
</dbReference>
<dbReference type="InterPro" id="IPR001427">
    <property type="entry name" value="RNaseA"/>
</dbReference>
<dbReference type="InterPro" id="IPR036816">
    <property type="entry name" value="RNaseA-like_dom_sf"/>
</dbReference>
<dbReference type="InterPro" id="IPR023411">
    <property type="entry name" value="RNaseA_AS"/>
</dbReference>
<dbReference type="InterPro" id="IPR023412">
    <property type="entry name" value="RNaseA_domain"/>
</dbReference>
<dbReference type="PANTHER" id="PTHR11437:SF60">
    <property type="entry name" value="ANGIOGENIN"/>
    <property type="match status" value="1"/>
</dbReference>
<dbReference type="PANTHER" id="PTHR11437">
    <property type="entry name" value="RIBONUCLEASE"/>
    <property type="match status" value="1"/>
</dbReference>
<dbReference type="Pfam" id="PF00074">
    <property type="entry name" value="RnaseA"/>
    <property type="match status" value="1"/>
</dbReference>
<dbReference type="PRINTS" id="PR00794">
    <property type="entry name" value="RIBONUCLEASE"/>
</dbReference>
<dbReference type="SMART" id="SM00092">
    <property type="entry name" value="RNAse_Pc"/>
    <property type="match status" value="1"/>
</dbReference>
<dbReference type="SUPFAM" id="SSF54076">
    <property type="entry name" value="RNase A-like"/>
    <property type="match status" value="1"/>
</dbReference>
<dbReference type="PROSITE" id="PS00127">
    <property type="entry name" value="RNASE_PANCREATIC"/>
    <property type="match status" value="1"/>
</dbReference>
<keyword id="KW-0037">Angiogenesis</keyword>
<keyword id="KW-0963">Cytoplasm</keyword>
<keyword id="KW-0217">Developmental protein</keyword>
<keyword id="KW-0221">Differentiation</keyword>
<keyword id="KW-1015">Disulfide bond</keyword>
<keyword id="KW-0238">DNA-binding</keyword>
<keyword id="KW-0255">Endonuclease</keyword>
<keyword id="KW-0378">Hydrolase</keyword>
<keyword id="KW-0540">Nuclease</keyword>
<keyword id="KW-0539">Nucleus</keyword>
<keyword id="KW-0652">Protein synthesis inhibitor</keyword>
<keyword id="KW-0873">Pyrrolidone carboxylic acid</keyword>
<keyword id="KW-0964">Secreted</keyword>
<keyword id="KW-0732">Signal</keyword>
<keyword id="KW-0346">Stress response</keyword>
<gene>
    <name type="primary">ANG</name>
    <name type="synonym">RNASE5</name>
</gene>
<sequence>MVMGLHLLLLVFILGLGLTPPTLAQNDIRYIKFLDQHYDPKTKNGNDKYCEKMMRLRNMISPCKEINTFIHGNKASIKAICGNQNGEPHNGNQRISKSAFQVTICRHIGGSPRPPCRYRATAGFRNLVVACENDLPVHLDESIFRP</sequence>
<reference key="1">
    <citation type="journal article" date="2002" name="Mol. Biol. Evol.">
        <title>Diversifying selection of the tumor-growth promoter angiogenin in primate evolution.</title>
        <authorList>
            <person name="Zhang J."/>
            <person name="Rosenberg H.F."/>
        </authorList>
    </citation>
    <scope>NUCLEOTIDE SEQUENCE [GENOMIC DNA]</scope>
</reference>
<name>ANGI_AOTTR</name>
<evidence type="ECO:0000250" key="1">
    <source>
        <dbReference type="UniProtKB" id="P03950"/>
    </source>
</evidence>
<evidence type="ECO:0000250" key="2">
    <source>
        <dbReference type="UniProtKB" id="P21570"/>
    </source>
</evidence>
<evidence type="ECO:0000305" key="3"/>
<protein>
    <recommendedName>
        <fullName>Angiogenin</fullName>
        <ecNumber evidence="1">3.1.27.-</ecNumber>
    </recommendedName>
    <alternativeName>
        <fullName>Ribonuclease 5</fullName>
        <shortName>RNase 5</shortName>
    </alternativeName>
</protein>
<proteinExistence type="inferred from homology"/>
<comment type="function">
    <text evidence="1 2">Secreted ribonuclease that can either promote or restrict cell proliferation of target cells, depending on the context. Endocytosed in target cells via its receptor PLXNB2 and translocates to the cytoplasm or nucleus. Under stress conditions, localizes to the cytoplasm and promotes the assembly of stress granules (SGs): specifically cleaves a subset of tRNAs within anticodon loops to produce tRNA-derived stress-induced fragments (tiRNAs), resulting in translation repression and inhibition of cell proliferation (By similarity). tiRNas also prevent formation of apoptosome, thereby promoting cell survival (By similarity). Preferentially cleaves RNAs between a pyrimidine and an adenosine residue, suggesting that it cleaves the anticodon loop of tRNA(Ala) (32-UUAGCAU-38) after positions 33 and 36. Cleaves a subset of tRNAs, including tRNA(Ala), tRNA(Glu), tRNA(Gly), tRNA(Lys), tRNA(Val), tRNA(His), tRNA(Asp) and tRNA(Sec). Under growth conditions and in differentiated cells, translocates to the nucleus and stimulates ribosomal RNA (rRNA) transcription, including that containing the initiation site sequences of 45S rRNA, thereby promoting cell growth and proliferation. Angiogenin induces vascularization of normal and malignant tissues via its ability to promote rRNA transcription. Involved in hematopoietic stem and progenitor cell (HSPC) growth and survival by promoting rRNA transcription in growth conditions and inhibiting translation in response to stress, respectively. Mediates the crosstalk between myeloid and intestinal epithelial cells to protect the intestinal epithelial barrier integrity: secreted by myeloid cells and promotes intestinal epithelial cells proliferation and survival (By similarity). Also mediates osteoclast-endothelial cell crosstalk in growing bone: produced by osteoclasts and protects the neighboring vascular cells against senescence by promoting rRNA transcription (By similarity).</text>
</comment>
<comment type="activity regulation">
    <text evidence="1">Has weak tRNA ribonuclease activity by itself due to partial autoinhibition by its C-terminus, which folds into a short alpha-helix that partially occludes the substrate-binding site. In absence of stress, the ribonuclease activity is inhibited by RNH1 in the cytoplasm. In response to stress, dissociates from RNH1 in the cytoplasm and associates with cytoplasmic ribosomes with vacant A-sites: ribosomes directly activate the tRNA ribonuclease activity of ANG by refolding the C-terminal alpha-helix. In response to stress, the angiogenic activity of ANG is inhibited by RNH1 in the nucleus.</text>
</comment>
<comment type="subunit">
    <text evidence="1">Homodimer. Interacts with RNH1; inhibiting ANG ribonuclease activity. Interacts with PCNA.</text>
</comment>
<comment type="subcellular location">
    <subcellularLocation>
        <location evidence="1">Secreted</location>
    </subcellularLocation>
    <subcellularLocation>
        <location evidence="1">Nucleus</location>
    </subcellularLocation>
    <subcellularLocation>
        <location evidence="1">Nucleus</location>
        <location evidence="1">Nucleolus</location>
    </subcellularLocation>
    <subcellularLocation>
        <location evidence="1">Cytoplasm</location>
        <location evidence="1">Stress granule</location>
    </subcellularLocation>
    <text evidence="1">The secreted protein is rapidly endocytosed by target cells following interaction with PLXNB2 receptor and translocated to the cytoplasm and nucleus. In the nucleus, accumulates in the nucleolus and binds to DNA.</text>
</comment>
<comment type="similarity">
    <text evidence="3">Belongs to the pancreatic ribonuclease family.</text>
</comment>
<accession>Q8WN61</accession>
<organism>
    <name type="scientific">Aotus trivirgatus</name>
    <name type="common">Three-striped night monkey</name>
    <name type="synonym">Douroucouli</name>
    <dbReference type="NCBI Taxonomy" id="9505"/>
    <lineage>
        <taxon>Eukaryota</taxon>
        <taxon>Metazoa</taxon>
        <taxon>Chordata</taxon>
        <taxon>Craniata</taxon>
        <taxon>Vertebrata</taxon>
        <taxon>Euteleostomi</taxon>
        <taxon>Mammalia</taxon>
        <taxon>Eutheria</taxon>
        <taxon>Euarchontoglires</taxon>
        <taxon>Primates</taxon>
        <taxon>Haplorrhini</taxon>
        <taxon>Platyrrhini</taxon>
        <taxon>Aotidae</taxon>
        <taxon>Aotus</taxon>
    </lineage>
</organism>